<keyword id="KW-0450">Lipoyl</keyword>
<keyword id="KW-1185">Reference proteome</keyword>
<organism>
    <name type="scientific">Azoarcus sp. (strain BH72)</name>
    <dbReference type="NCBI Taxonomy" id="418699"/>
    <lineage>
        <taxon>Bacteria</taxon>
        <taxon>Pseudomonadati</taxon>
        <taxon>Pseudomonadota</taxon>
        <taxon>Betaproteobacteria</taxon>
        <taxon>Rhodocyclales</taxon>
        <taxon>Zoogloeaceae</taxon>
        <taxon>Azoarcus</taxon>
    </lineage>
</organism>
<reference key="1">
    <citation type="journal article" date="2006" name="Nat. Biotechnol.">
        <title>Complete genome of the mutualistic, N2-fixing grass endophyte Azoarcus sp. strain BH72.</title>
        <authorList>
            <person name="Krause A."/>
            <person name="Ramakumar A."/>
            <person name="Bartels D."/>
            <person name="Battistoni F."/>
            <person name="Bekel T."/>
            <person name="Boch J."/>
            <person name="Boehm M."/>
            <person name="Friedrich F."/>
            <person name="Hurek T."/>
            <person name="Krause L."/>
            <person name="Linke B."/>
            <person name="McHardy A.C."/>
            <person name="Sarkar A."/>
            <person name="Schneiker S."/>
            <person name="Syed A.A."/>
            <person name="Thauer R."/>
            <person name="Vorhoelter F.-J."/>
            <person name="Weidner S."/>
            <person name="Puehler A."/>
            <person name="Reinhold-Hurek B."/>
            <person name="Kaiser O."/>
            <person name="Goesmann A."/>
        </authorList>
    </citation>
    <scope>NUCLEOTIDE SEQUENCE [LARGE SCALE GENOMIC DNA]</scope>
    <source>
        <strain>BH72</strain>
    </source>
</reference>
<feature type="chain" id="PRO_0000302345" description="Glycine cleavage system H protein">
    <location>
        <begin position="1"/>
        <end position="127"/>
    </location>
</feature>
<feature type="domain" description="Lipoyl-binding" evidence="2">
    <location>
        <begin position="24"/>
        <end position="105"/>
    </location>
</feature>
<feature type="modified residue" description="N6-lipoyllysine" evidence="1">
    <location>
        <position position="65"/>
    </location>
</feature>
<name>GCSH_AZOSB</name>
<evidence type="ECO:0000255" key="1">
    <source>
        <dbReference type="HAMAP-Rule" id="MF_00272"/>
    </source>
</evidence>
<evidence type="ECO:0000255" key="2">
    <source>
        <dbReference type="PROSITE-ProRule" id="PRU01066"/>
    </source>
</evidence>
<protein>
    <recommendedName>
        <fullName evidence="1">Glycine cleavage system H protein</fullName>
    </recommendedName>
</protein>
<accession>A1K4Z8</accession>
<sequence>MSTIPNDLKYTKSHEWIRLEADGTLTVGVTDHAQAALGDVVFLELPEAGRVVSAGEACAVIESVKAASDIYAPVAGEVIARNDSVTDAPESVNADAYAAWLFKLKPANAGDTSALLDAAGYATEIAD</sequence>
<proteinExistence type="inferred from homology"/>
<comment type="function">
    <text evidence="1">The glycine cleavage system catalyzes the degradation of glycine. The H protein shuttles the methylamine group of glycine from the P protein to the T protein.</text>
</comment>
<comment type="cofactor">
    <cofactor evidence="1">
        <name>(R)-lipoate</name>
        <dbReference type="ChEBI" id="CHEBI:83088"/>
    </cofactor>
    <text evidence="1">Binds 1 lipoyl cofactor covalently.</text>
</comment>
<comment type="subunit">
    <text evidence="1">The glycine cleavage system is composed of four proteins: P, T, L and H.</text>
</comment>
<comment type="similarity">
    <text evidence="1">Belongs to the GcvH family.</text>
</comment>
<gene>
    <name evidence="1" type="primary">gcvH</name>
    <name type="ordered locus">azo1286</name>
</gene>
<dbReference type="EMBL" id="AM406670">
    <property type="protein sequence ID" value="CAL93903.1"/>
    <property type="molecule type" value="Genomic_DNA"/>
</dbReference>
<dbReference type="RefSeq" id="WP_011765019.1">
    <property type="nucleotide sequence ID" value="NC_008702.1"/>
</dbReference>
<dbReference type="SMR" id="A1K4Z8"/>
<dbReference type="STRING" id="62928.azo1286"/>
<dbReference type="KEGG" id="aoa:dqs_1401"/>
<dbReference type="KEGG" id="azo:azo1286"/>
<dbReference type="eggNOG" id="COG0509">
    <property type="taxonomic scope" value="Bacteria"/>
</dbReference>
<dbReference type="HOGENOM" id="CLU_097408_2_1_4"/>
<dbReference type="OrthoDB" id="9796712at2"/>
<dbReference type="Proteomes" id="UP000002588">
    <property type="component" value="Chromosome"/>
</dbReference>
<dbReference type="GO" id="GO:0005829">
    <property type="term" value="C:cytosol"/>
    <property type="evidence" value="ECO:0007669"/>
    <property type="project" value="TreeGrafter"/>
</dbReference>
<dbReference type="GO" id="GO:0005960">
    <property type="term" value="C:glycine cleavage complex"/>
    <property type="evidence" value="ECO:0007669"/>
    <property type="project" value="InterPro"/>
</dbReference>
<dbReference type="GO" id="GO:0019464">
    <property type="term" value="P:glycine decarboxylation via glycine cleavage system"/>
    <property type="evidence" value="ECO:0007669"/>
    <property type="project" value="UniProtKB-UniRule"/>
</dbReference>
<dbReference type="CDD" id="cd06848">
    <property type="entry name" value="GCS_H"/>
    <property type="match status" value="1"/>
</dbReference>
<dbReference type="Gene3D" id="2.40.50.100">
    <property type="match status" value="1"/>
</dbReference>
<dbReference type="HAMAP" id="MF_00272">
    <property type="entry name" value="GcvH"/>
    <property type="match status" value="1"/>
</dbReference>
<dbReference type="InterPro" id="IPR003016">
    <property type="entry name" value="2-oxoA_DH_lipoyl-BS"/>
</dbReference>
<dbReference type="InterPro" id="IPR000089">
    <property type="entry name" value="Biotin_lipoyl"/>
</dbReference>
<dbReference type="InterPro" id="IPR002930">
    <property type="entry name" value="GCV_H"/>
</dbReference>
<dbReference type="InterPro" id="IPR033753">
    <property type="entry name" value="GCV_H/Fam206"/>
</dbReference>
<dbReference type="InterPro" id="IPR017453">
    <property type="entry name" value="GCV_H_sub"/>
</dbReference>
<dbReference type="InterPro" id="IPR011053">
    <property type="entry name" value="Single_hybrid_motif"/>
</dbReference>
<dbReference type="NCBIfam" id="TIGR00527">
    <property type="entry name" value="gcvH"/>
    <property type="match status" value="1"/>
</dbReference>
<dbReference type="NCBIfam" id="NF002270">
    <property type="entry name" value="PRK01202.1"/>
    <property type="match status" value="1"/>
</dbReference>
<dbReference type="PANTHER" id="PTHR11715">
    <property type="entry name" value="GLYCINE CLEAVAGE SYSTEM H PROTEIN"/>
    <property type="match status" value="1"/>
</dbReference>
<dbReference type="PANTHER" id="PTHR11715:SF3">
    <property type="entry name" value="GLYCINE CLEAVAGE SYSTEM H PROTEIN-RELATED"/>
    <property type="match status" value="1"/>
</dbReference>
<dbReference type="Pfam" id="PF01597">
    <property type="entry name" value="GCV_H"/>
    <property type="match status" value="1"/>
</dbReference>
<dbReference type="SUPFAM" id="SSF51230">
    <property type="entry name" value="Single hybrid motif"/>
    <property type="match status" value="1"/>
</dbReference>
<dbReference type="PROSITE" id="PS50968">
    <property type="entry name" value="BIOTINYL_LIPOYL"/>
    <property type="match status" value="1"/>
</dbReference>
<dbReference type="PROSITE" id="PS00189">
    <property type="entry name" value="LIPOYL"/>
    <property type="match status" value="1"/>
</dbReference>